<sequence>MSAAARGLVRLVKSYQRHLSPRKPAPTCRFTPTCSQYAVEAIERHGALKGAWLAAWRVLRCNPLVPGGCDPVPEHFPSWRGPHPKTPSRKTPE</sequence>
<dbReference type="EMBL" id="CP000359">
    <property type="protein sequence ID" value="ABF45861.1"/>
    <property type="molecule type" value="Genomic_DNA"/>
</dbReference>
<dbReference type="STRING" id="319795.Dgeo_1566"/>
<dbReference type="KEGG" id="dge:Dgeo_1566"/>
<dbReference type="eggNOG" id="COG0759">
    <property type="taxonomic scope" value="Bacteria"/>
</dbReference>
<dbReference type="HOGENOM" id="CLU_144811_2_2_0"/>
<dbReference type="Proteomes" id="UP000002431">
    <property type="component" value="Chromosome"/>
</dbReference>
<dbReference type="GO" id="GO:0005886">
    <property type="term" value="C:plasma membrane"/>
    <property type="evidence" value="ECO:0007669"/>
    <property type="project" value="UniProtKB-SubCell"/>
</dbReference>
<dbReference type="HAMAP" id="MF_00386">
    <property type="entry name" value="UPF0161_YidD"/>
    <property type="match status" value="1"/>
</dbReference>
<dbReference type="InterPro" id="IPR002696">
    <property type="entry name" value="Membr_insert_effic_factor_YidD"/>
</dbReference>
<dbReference type="NCBIfam" id="TIGR00278">
    <property type="entry name" value="membrane protein insertion efficiency factor YidD"/>
    <property type="match status" value="1"/>
</dbReference>
<dbReference type="PANTHER" id="PTHR33383">
    <property type="entry name" value="MEMBRANE PROTEIN INSERTION EFFICIENCY FACTOR-RELATED"/>
    <property type="match status" value="1"/>
</dbReference>
<dbReference type="PANTHER" id="PTHR33383:SF1">
    <property type="entry name" value="MEMBRANE PROTEIN INSERTION EFFICIENCY FACTOR-RELATED"/>
    <property type="match status" value="1"/>
</dbReference>
<dbReference type="Pfam" id="PF01809">
    <property type="entry name" value="YidD"/>
    <property type="match status" value="1"/>
</dbReference>
<dbReference type="SMART" id="SM01234">
    <property type="entry name" value="Haemolytic"/>
    <property type="match status" value="1"/>
</dbReference>
<feature type="chain" id="PRO_0000253103" description="Putative membrane protein insertion efficiency factor">
    <location>
        <begin position="1"/>
        <end position="93"/>
    </location>
</feature>
<feature type="region of interest" description="Disordered" evidence="2">
    <location>
        <begin position="72"/>
        <end position="93"/>
    </location>
</feature>
<feature type="compositionally biased region" description="Basic residues" evidence="2">
    <location>
        <begin position="82"/>
        <end position="93"/>
    </location>
</feature>
<reference key="1">
    <citation type="submission" date="2006-04" db="EMBL/GenBank/DDBJ databases">
        <title>Complete sequence of chromosome of Deinococcus geothermalis DSM 11300.</title>
        <authorList>
            <person name="Copeland A."/>
            <person name="Lucas S."/>
            <person name="Lapidus A."/>
            <person name="Barry K."/>
            <person name="Detter J.C."/>
            <person name="Glavina del Rio T."/>
            <person name="Hammon N."/>
            <person name="Israni S."/>
            <person name="Dalin E."/>
            <person name="Tice H."/>
            <person name="Pitluck S."/>
            <person name="Brettin T."/>
            <person name="Bruce D."/>
            <person name="Han C."/>
            <person name="Tapia R."/>
            <person name="Saunders E."/>
            <person name="Gilna P."/>
            <person name="Schmutz J."/>
            <person name="Larimer F."/>
            <person name="Land M."/>
            <person name="Hauser L."/>
            <person name="Kyrpides N."/>
            <person name="Kim E."/>
            <person name="Daly M.J."/>
            <person name="Fredrickson J.K."/>
            <person name="Makarova K.S."/>
            <person name="Gaidamakova E.K."/>
            <person name="Zhai M."/>
            <person name="Richardson P."/>
        </authorList>
    </citation>
    <scope>NUCLEOTIDE SEQUENCE [LARGE SCALE GENOMIC DNA]</scope>
    <source>
        <strain>DSM 11300 / CIP 105573 / AG-3a</strain>
    </source>
</reference>
<keyword id="KW-1003">Cell membrane</keyword>
<keyword id="KW-0472">Membrane</keyword>
<organism>
    <name type="scientific">Deinococcus geothermalis (strain DSM 11300 / CIP 105573 / AG-3a)</name>
    <dbReference type="NCBI Taxonomy" id="319795"/>
    <lineage>
        <taxon>Bacteria</taxon>
        <taxon>Thermotogati</taxon>
        <taxon>Deinococcota</taxon>
        <taxon>Deinococci</taxon>
        <taxon>Deinococcales</taxon>
        <taxon>Deinococcaceae</taxon>
        <taxon>Deinococcus</taxon>
    </lineage>
</organism>
<accession>Q1IY23</accession>
<gene>
    <name type="ordered locus">Dgeo_1566</name>
</gene>
<proteinExistence type="inferred from homology"/>
<comment type="function">
    <text evidence="1">Could be involved in insertion of integral membrane proteins into the membrane.</text>
</comment>
<comment type="subcellular location">
    <subcellularLocation>
        <location evidence="1">Cell membrane</location>
        <topology evidence="1">Peripheral membrane protein</topology>
        <orientation evidence="1">Cytoplasmic side</orientation>
    </subcellularLocation>
</comment>
<comment type="similarity">
    <text evidence="1">Belongs to the UPF0161 family.</text>
</comment>
<name>YIDD_DEIGD</name>
<evidence type="ECO:0000255" key="1">
    <source>
        <dbReference type="HAMAP-Rule" id="MF_00386"/>
    </source>
</evidence>
<evidence type="ECO:0000256" key="2">
    <source>
        <dbReference type="SAM" id="MobiDB-lite"/>
    </source>
</evidence>
<protein>
    <recommendedName>
        <fullName evidence="1">Putative membrane protein insertion efficiency factor</fullName>
    </recommendedName>
</protein>